<dbReference type="EMBL" id="FJ411281">
    <property type="protein sequence ID" value="ACR83842.1"/>
    <property type="molecule type" value="mRNA"/>
</dbReference>
<dbReference type="SMR" id="E3P6N6"/>
<dbReference type="MEROPS" id="I25.012"/>
<dbReference type="GO" id="GO:0070062">
    <property type="term" value="C:extracellular exosome"/>
    <property type="evidence" value="ECO:0007669"/>
    <property type="project" value="TreeGrafter"/>
</dbReference>
<dbReference type="GO" id="GO:0004869">
    <property type="term" value="F:cysteine-type endopeptidase inhibitor activity"/>
    <property type="evidence" value="ECO:0007669"/>
    <property type="project" value="UniProtKB-KW"/>
</dbReference>
<dbReference type="CDD" id="cd00042">
    <property type="entry name" value="CY"/>
    <property type="match status" value="1"/>
</dbReference>
<dbReference type="FunFam" id="3.10.450.10:FF:000004">
    <property type="entry name" value="Cystatin C"/>
    <property type="match status" value="1"/>
</dbReference>
<dbReference type="Gene3D" id="3.10.450.10">
    <property type="match status" value="1"/>
</dbReference>
<dbReference type="InterPro" id="IPR000010">
    <property type="entry name" value="Cystatin_dom"/>
</dbReference>
<dbReference type="InterPro" id="IPR046350">
    <property type="entry name" value="Cystatin_sf"/>
</dbReference>
<dbReference type="InterPro" id="IPR018073">
    <property type="entry name" value="Prot_inh_cystat_CS"/>
</dbReference>
<dbReference type="PANTHER" id="PTHR47033">
    <property type="entry name" value="CYSTATIN-M"/>
    <property type="match status" value="1"/>
</dbReference>
<dbReference type="PANTHER" id="PTHR47033:SF1">
    <property type="entry name" value="CYSTATIN-M"/>
    <property type="match status" value="1"/>
</dbReference>
<dbReference type="Pfam" id="PF00031">
    <property type="entry name" value="Cystatin"/>
    <property type="match status" value="1"/>
</dbReference>
<dbReference type="SMART" id="SM00043">
    <property type="entry name" value="CY"/>
    <property type="match status" value="1"/>
</dbReference>
<dbReference type="SUPFAM" id="SSF54403">
    <property type="entry name" value="Cystatin/monellin"/>
    <property type="match status" value="1"/>
</dbReference>
<dbReference type="PROSITE" id="PS00287">
    <property type="entry name" value="CYSTATIN"/>
    <property type="match status" value="1"/>
</dbReference>
<name>CYT_OXYSC</name>
<evidence type="ECO:0000250" key="1"/>
<evidence type="ECO:0000305" key="2"/>
<evidence type="ECO:0000305" key="3">
    <source>
    </source>
</evidence>
<accession>E3P6N6</accession>
<comment type="function">
    <text evidence="1">Inhibits various C1 cysteine proteases including cathepsin L, papain and cathepsin B. This protein has no toxic activity and its function in the venom is unknown. It may play a role as a housekeeping or regulatory protein (By similarity).</text>
</comment>
<comment type="subcellular location">
    <subcellularLocation>
        <location>Secreted</location>
    </subcellularLocation>
</comment>
<comment type="tissue specificity">
    <text evidence="3">Expressed at a low level by the venom gland (at protein level).</text>
</comment>
<comment type="miscellaneous">
    <text evidence="1">Negative results: the recombinant protein does not inhibit calpain-1 (CAPN1), a C2 family cysteine protease and legumain (LGMN), a C13 family cysteine protease. Does not provoke cell death (PC3 prostrate cancer cells) (By similarity).</text>
</comment>
<comment type="similarity">
    <text evidence="2">Belongs to the cystatin family.</text>
</comment>
<organism>
    <name type="scientific">Oxyuranus scutellatus scutellatus</name>
    <name type="common">Australian taipan</name>
    <name type="synonym">Coastal taipan</name>
    <dbReference type="NCBI Taxonomy" id="8667"/>
    <lineage>
        <taxon>Eukaryota</taxon>
        <taxon>Metazoa</taxon>
        <taxon>Chordata</taxon>
        <taxon>Craniata</taxon>
        <taxon>Vertebrata</taxon>
        <taxon>Euteleostomi</taxon>
        <taxon>Lepidosauria</taxon>
        <taxon>Squamata</taxon>
        <taxon>Bifurcata</taxon>
        <taxon>Unidentata</taxon>
        <taxon>Episquamata</taxon>
        <taxon>Toxicofera</taxon>
        <taxon>Serpentes</taxon>
        <taxon>Colubroidea</taxon>
        <taxon>Elapidae</taxon>
        <taxon>Hydrophiinae</taxon>
        <taxon>Oxyuranus</taxon>
    </lineage>
</organism>
<sequence>MVHSQLPVAAPLRLLCALLLLPSATMIPGGLSPRSVTDPDVQKAAEFAVQEYNALSTNAYYYKQLRIVEAQSQVVAGAKYYLTMELMKTKCAKTTGKPKVYKEIQNCELPPKAQQEKLTCHFQVWSRPWLEKVELTKMSCN</sequence>
<reference key="1">
    <citation type="journal article" date="2011" name="Biochimie">
        <title>Cloning and characterisation of novel cystatins from elapid snake venom glands.</title>
        <authorList>
            <person name="Richards R."/>
            <person name="St Pierre L."/>
            <person name="Trabi M."/>
            <person name="Johnson L.A."/>
            <person name="de Jersey J."/>
            <person name="Masci P.P."/>
            <person name="Lavin M.F."/>
        </authorList>
    </citation>
    <scope>NUCLEOTIDE SEQUENCE [MRNA]</scope>
    <scope>LEVEL OF PROTEIN EXPRESSION</scope>
    <source>
        <tissue>Venom</tissue>
        <tissue>Venom gland</tissue>
    </source>
</reference>
<feature type="signal peptide" evidence="1">
    <location>
        <begin position="1"/>
        <end position="26"/>
    </location>
</feature>
<feature type="chain" id="PRO_5000654415" description="Cystatin">
    <location>
        <begin position="27"/>
        <end position="141"/>
    </location>
</feature>
<feature type="domain" description="Cystatin">
    <location>
        <begin position="29"/>
        <end position="129"/>
    </location>
</feature>
<feature type="short sequence motif" description="Secondary area of contact" evidence="1">
    <location>
        <begin position="73"/>
        <end position="77"/>
    </location>
</feature>
<feature type="site" description="Reactive site" evidence="1">
    <location>
        <position position="29"/>
    </location>
</feature>
<feature type="disulfide bond" evidence="1">
    <location>
        <begin position="91"/>
        <end position="107"/>
    </location>
</feature>
<feature type="disulfide bond" evidence="1">
    <location>
        <begin position="120"/>
        <end position="140"/>
    </location>
</feature>
<proteinExistence type="evidence at protein level"/>
<keyword id="KW-1015">Disulfide bond</keyword>
<keyword id="KW-0646">Protease inhibitor</keyword>
<keyword id="KW-0964">Secreted</keyword>
<keyword id="KW-0732">Signal</keyword>
<keyword id="KW-0789">Thiol protease inhibitor</keyword>
<protein>
    <recommendedName>
        <fullName>Cystatin</fullName>
    </recommendedName>
</protein>